<feature type="chain" id="PRO_0000382892" description="Tetraspanin-1">
    <location>
        <begin position="1"/>
        <end position="241"/>
    </location>
</feature>
<feature type="transmembrane region" description="Helical" evidence="3">
    <location>
        <begin position="12"/>
        <end position="32"/>
    </location>
</feature>
<feature type="transmembrane region" description="Helical" evidence="3">
    <location>
        <begin position="53"/>
        <end position="73"/>
    </location>
</feature>
<feature type="transmembrane region" description="Helical" evidence="3">
    <location>
        <begin position="89"/>
        <end position="109"/>
    </location>
</feature>
<feature type="transmembrane region" description="Helical" evidence="3">
    <location>
        <begin position="212"/>
        <end position="232"/>
    </location>
</feature>
<feature type="glycosylation site" description="N-linked (GlcNAc...) asparagine" evidence="3">
    <location>
        <position position="154"/>
    </location>
</feature>
<gene>
    <name type="primary">Tspan1</name>
</gene>
<proteinExistence type="evidence at protein level"/>
<dbReference type="EMBL" id="BC078938">
    <property type="protein sequence ID" value="AAH78938.1"/>
    <property type="molecule type" value="mRNA"/>
</dbReference>
<dbReference type="RefSeq" id="NP_001004236.1">
    <property type="nucleotide sequence ID" value="NM_001004236.1"/>
</dbReference>
<dbReference type="RefSeq" id="XP_006238701.1">
    <property type="nucleotide sequence ID" value="XM_006238639.4"/>
</dbReference>
<dbReference type="RefSeq" id="XP_017448763.1">
    <property type="nucleotide sequence ID" value="XM_017593274.3"/>
</dbReference>
<dbReference type="SMR" id="Q6AYR9"/>
<dbReference type="FunCoup" id="Q6AYR9">
    <property type="interactions" value="25"/>
</dbReference>
<dbReference type="STRING" id="10116.ENSRNOP00000072392"/>
<dbReference type="GlyCosmos" id="Q6AYR9">
    <property type="glycosylation" value="1 site, No reported glycans"/>
</dbReference>
<dbReference type="GlyGen" id="Q6AYR9">
    <property type="glycosylation" value="2 sites"/>
</dbReference>
<dbReference type="PhosphoSitePlus" id="Q6AYR9"/>
<dbReference type="PaxDb" id="10116-ENSRNOP00000018766"/>
<dbReference type="Ensembl" id="ENSRNOT00000018766.5">
    <property type="protein sequence ID" value="ENSRNOP00000018766.3"/>
    <property type="gene ID" value="ENSRNOG00000023320.5"/>
</dbReference>
<dbReference type="GeneID" id="298436"/>
<dbReference type="KEGG" id="rno:298436"/>
<dbReference type="UCSC" id="RGD:1303308">
    <property type="organism name" value="rat"/>
</dbReference>
<dbReference type="AGR" id="RGD:1303308"/>
<dbReference type="CTD" id="10103"/>
<dbReference type="RGD" id="1303308">
    <property type="gene designation" value="Tspan1"/>
</dbReference>
<dbReference type="eggNOG" id="KOG3882">
    <property type="taxonomic scope" value="Eukaryota"/>
</dbReference>
<dbReference type="GeneTree" id="ENSGT00940000158851"/>
<dbReference type="InParanoid" id="Q6AYR9"/>
<dbReference type="OMA" id="CYGAHTE"/>
<dbReference type="OrthoDB" id="6134317at2759"/>
<dbReference type="PhylomeDB" id="Q6AYR9"/>
<dbReference type="TreeFam" id="TF352892"/>
<dbReference type="PRO" id="PR:Q6AYR9"/>
<dbReference type="Proteomes" id="UP000002494">
    <property type="component" value="Chromosome 5"/>
</dbReference>
<dbReference type="Bgee" id="ENSRNOG00000023320">
    <property type="expression patterns" value="Expressed in stomach and 18 other cell types or tissues"/>
</dbReference>
<dbReference type="GO" id="GO:0030054">
    <property type="term" value="C:cell junction"/>
    <property type="evidence" value="ECO:0007669"/>
    <property type="project" value="Ensembl"/>
</dbReference>
<dbReference type="GO" id="GO:0005737">
    <property type="term" value="C:cytoplasm"/>
    <property type="evidence" value="ECO:0000266"/>
    <property type="project" value="RGD"/>
</dbReference>
<dbReference type="GO" id="GO:0005765">
    <property type="term" value="C:lysosomal membrane"/>
    <property type="evidence" value="ECO:0007669"/>
    <property type="project" value="UniProtKB-SubCell"/>
</dbReference>
<dbReference type="GO" id="GO:0016020">
    <property type="term" value="C:membrane"/>
    <property type="evidence" value="ECO:0000266"/>
    <property type="project" value="RGD"/>
</dbReference>
<dbReference type="GO" id="GO:0005654">
    <property type="term" value="C:nucleoplasm"/>
    <property type="evidence" value="ECO:0007669"/>
    <property type="project" value="Ensembl"/>
</dbReference>
<dbReference type="GO" id="GO:0048471">
    <property type="term" value="C:perinuclear region of cytoplasm"/>
    <property type="evidence" value="ECO:0000266"/>
    <property type="project" value="RGD"/>
</dbReference>
<dbReference type="GO" id="GO:0005886">
    <property type="term" value="C:plasma membrane"/>
    <property type="evidence" value="ECO:0000266"/>
    <property type="project" value="RGD"/>
</dbReference>
<dbReference type="GO" id="GO:0031982">
    <property type="term" value="C:vesicle"/>
    <property type="evidence" value="ECO:0000266"/>
    <property type="project" value="RGD"/>
</dbReference>
<dbReference type="GO" id="GO:0050821">
    <property type="term" value="P:protein stabilization"/>
    <property type="evidence" value="ECO:0000266"/>
    <property type="project" value="RGD"/>
</dbReference>
<dbReference type="CDD" id="cd03156">
    <property type="entry name" value="uroplakin_I_like_LEL"/>
    <property type="match status" value="1"/>
</dbReference>
<dbReference type="FunFam" id="1.10.1450.10:FF:000020">
    <property type="entry name" value="Tetraspanin"/>
    <property type="match status" value="1"/>
</dbReference>
<dbReference type="Gene3D" id="1.10.1450.10">
    <property type="entry name" value="Tetraspanin"/>
    <property type="match status" value="1"/>
</dbReference>
<dbReference type="InterPro" id="IPR018499">
    <property type="entry name" value="Tetraspanin/Peripherin"/>
</dbReference>
<dbReference type="InterPro" id="IPR000301">
    <property type="entry name" value="Tetraspanin_animals"/>
</dbReference>
<dbReference type="InterPro" id="IPR018503">
    <property type="entry name" value="Tetraspanin_CS"/>
</dbReference>
<dbReference type="InterPro" id="IPR008952">
    <property type="entry name" value="Tetraspanin_EC2_sf"/>
</dbReference>
<dbReference type="PANTHER" id="PTHR19282">
    <property type="entry name" value="TETRASPANIN"/>
    <property type="match status" value="1"/>
</dbReference>
<dbReference type="PANTHER" id="PTHR19282:SF216">
    <property type="entry name" value="TETRASPANIN-1"/>
    <property type="match status" value="1"/>
</dbReference>
<dbReference type="Pfam" id="PF00335">
    <property type="entry name" value="Tetraspanin"/>
    <property type="match status" value="1"/>
</dbReference>
<dbReference type="PIRSF" id="PIRSF002419">
    <property type="entry name" value="Tetraspanin"/>
    <property type="match status" value="1"/>
</dbReference>
<dbReference type="PRINTS" id="PR00259">
    <property type="entry name" value="TMFOUR"/>
</dbReference>
<dbReference type="SUPFAM" id="SSF48652">
    <property type="entry name" value="Tetraspanin"/>
    <property type="match status" value="1"/>
</dbReference>
<dbReference type="PROSITE" id="PS00421">
    <property type="entry name" value="TM4_1"/>
    <property type="match status" value="1"/>
</dbReference>
<keyword id="KW-1003">Cell membrane</keyword>
<keyword id="KW-0325">Glycoprotein</keyword>
<keyword id="KW-0458">Lysosome</keyword>
<keyword id="KW-0472">Membrane</keyword>
<keyword id="KW-1185">Reference proteome</keyword>
<keyword id="KW-0812">Transmembrane</keyword>
<keyword id="KW-1133">Transmembrane helix</keyword>
<name>TSN1_RAT</name>
<organism>
    <name type="scientific">Rattus norvegicus</name>
    <name type="common">Rat</name>
    <dbReference type="NCBI Taxonomy" id="10116"/>
    <lineage>
        <taxon>Eukaryota</taxon>
        <taxon>Metazoa</taxon>
        <taxon>Chordata</taxon>
        <taxon>Craniata</taxon>
        <taxon>Vertebrata</taxon>
        <taxon>Euteleostomi</taxon>
        <taxon>Mammalia</taxon>
        <taxon>Eutheria</taxon>
        <taxon>Euarchontoglires</taxon>
        <taxon>Glires</taxon>
        <taxon>Rodentia</taxon>
        <taxon>Myomorpha</taxon>
        <taxon>Muroidea</taxon>
        <taxon>Muridae</taxon>
        <taxon>Murinae</taxon>
        <taxon>Rattus</taxon>
    </lineage>
</organism>
<evidence type="ECO:0000250" key="1"/>
<evidence type="ECO:0000250" key="2">
    <source>
        <dbReference type="UniProtKB" id="O60635"/>
    </source>
</evidence>
<evidence type="ECO:0000255" key="3"/>
<evidence type="ECO:0000269" key="4">
    <source>
    </source>
</evidence>
<evidence type="ECO:0000305" key="5"/>
<sequence length="241" mass="26453">MQCFKFIKVMMILFNLLIFLCGAALLAVGIWVSVDGTSFLKAFGSLSSSAMQFVNVGYFLIAAGAVLFILGFLGCYGAHSENKCVLMMFFSILLIIFIAEIAGAVVALVYTTMAEQFLTFLVVPAIEKDYGYQTEFTQVWNSTMEGLHCCGFNNYTDFNSSRFVKENKVFPPFCCANNTDSHTVEPCTEDKAKSMNVQGCFKQILQKIRTNAVTVGGVAVGVAALELAAMVVSMYLYCNLK</sequence>
<accession>Q6AYR9</accession>
<comment type="function">
    <text evidence="2 4">Structural component of specialized membrane microdomains known as tetraspanin-enriched microdomains (TERMs), which act as platforms for receptor clustering and signaling. Participates thereby in diverse biological functions such as cell signal transduction, adhesion, migration and protein trafficking (By similarity). Regulates neuronal differentiation in response to NGF by facilitating NGF-mediated activation of NTRK1/TRKA receptor tyrosine kinase and subsequent downstream signaling pathways (PubMed:31440771). Plays a role in the inhibition of TNFalpha-induced apoptosis. Mechanistically, inhibits the NF-kappa-B signaling pathway by blocking phosphorylation of CHUK. Also promotes the stability of the thiamine transporter 1/SLC19A2 in intestinal epithelial cells leading to an increase of thiamine uptake process (By similarity).</text>
</comment>
<comment type="subunit">
    <text evidence="2 4">Interacts with SLC19A2 (By similarity). Interacts with NTRK1/TRKA (PubMed:31440771).</text>
</comment>
<comment type="subcellular location">
    <subcellularLocation>
        <location evidence="4">Cell membrane</location>
        <topology evidence="3">Multi-pass membrane protein</topology>
    </subcellularLocation>
    <subcellularLocation>
        <location evidence="1">Lysosome membrane</location>
        <topology evidence="1">Multi-pass membrane protein</topology>
    </subcellularLocation>
</comment>
<comment type="similarity">
    <text evidence="5">Belongs to the tetraspanin (TM4SF) family.</text>
</comment>
<reference key="1">
    <citation type="journal article" date="2004" name="Genome Res.">
        <title>The status, quality, and expansion of the NIH full-length cDNA project: the Mammalian Gene Collection (MGC).</title>
        <authorList>
            <consortium name="The MGC Project Team"/>
        </authorList>
    </citation>
    <scope>NUCLEOTIDE SEQUENCE [LARGE SCALE MRNA]</scope>
    <source>
        <tissue>Kidney</tissue>
    </source>
</reference>
<reference key="2">
    <citation type="journal article" date="2020" name="Cell. Mol. Life Sci.">
        <title>Tetraspanin1 promotes NGF signaling by controlling TrkA receptor proteostasis.</title>
        <authorList>
            <person name="Ferrero Restelli F."/>
            <person name="Fontanet P.A."/>
            <person name="De Vincenti A.P."/>
            <person name="Falzone T.L."/>
            <person name="Ledda F."/>
            <person name="Paratcha G."/>
        </authorList>
    </citation>
    <scope>FUNCTION</scope>
    <scope>SUBCELLULAR LOCATION</scope>
    <scope>INTERACTION WITH NTRK1/TRKA</scope>
</reference>
<protein>
    <recommendedName>
        <fullName>Tetraspanin-1</fullName>
        <shortName>Tspan-1</shortName>
    </recommendedName>
</protein>